<evidence type="ECO:0000255" key="1">
    <source>
        <dbReference type="HAMAP-Rule" id="MF_01537"/>
    </source>
</evidence>
<proteinExistence type="inferred from homology"/>
<sequence length="105" mass="11779">MSEFKNVTAVKKANVYFDGKVSSRVIILPNGERKTLGLMLPGEYTFSTREEEIMEMLAGSMDVKLPGSNEFVTYKEGQKFNVPSDSSFDLKVNEVVDYCCSYIAD</sequence>
<name>PPNP_CLOD6</name>
<comment type="function">
    <text evidence="1">Catalyzes the phosphorolysis of diverse nucleosides, yielding D-ribose 1-phosphate and the respective free bases. Can use uridine, adenosine, guanosine, cytidine, thymidine, inosine and xanthosine as substrates. Also catalyzes the reverse reactions.</text>
</comment>
<comment type="catalytic activity">
    <reaction evidence="1">
        <text>a purine D-ribonucleoside + phosphate = a purine nucleobase + alpha-D-ribose 1-phosphate</text>
        <dbReference type="Rhea" id="RHEA:19805"/>
        <dbReference type="ChEBI" id="CHEBI:26386"/>
        <dbReference type="ChEBI" id="CHEBI:43474"/>
        <dbReference type="ChEBI" id="CHEBI:57720"/>
        <dbReference type="ChEBI" id="CHEBI:142355"/>
        <dbReference type="EC" id="2.4.2.1"/>
    </reaction>
</comment>
<comment type="catalytic activity">
    <reaction evidence="1">
        <text>adenosine + phosphate = alpha-D-ribose 1-phosphate + adenine</text>
        <dbReference type="Rhea" id="RHEA:27642"/>
        <dbReference type="ChEBI" id="CHEBI:16335"/>
        <dbReference type="ChEBI" id="CHEBI:16708"/>
        <dbReference type="ChEBI" id="CHEBI:43474"/>
        <dbReference type="ChEBI" id="CHEBI:57720"/>
        <dbReference type="EC" id="2.4.2.1"/>
    </reaction>
</comment>
<comment type="catalytic activity">
    <reaction evidence="1">
        <text>cytidine + phosphate = cytosine + alpha-D-ribose 1-phosphate</text>
        <dbReference type="Rhea" id="RHEA:52540"/>
        <dbReference type="ChEBI" id="CHEBI:16040"/>
        <dbReference type="ChEBI" id="CHEBI:17562"/>
        <dbReference type="ChEBI" id="CHEBI:43474"/>
        <dbReference type="ChEBI" id="CHEBI:57720"/>
        <dbReference type="EC" id="2.4.2.2"/>
    </reaction>
</comment>
<comment type="catalytic activity">
    <reaction evidence="1">
        <text>guanosine + phosphate = alpha-D-ribose 1-phosphate + guanine</text>
        <dbReference type="Rhea" id="RHEA:13233"/>
        <dbReference type="ChEBI" id="CHEBI:16235"/>
        <dbReference type="ChEBI" id="CHEBI:16750"/>
        <dbReference type="ChEBI" id="CHEBI:43474"/>
        <dbReference type="ChEBI" id="CHEBI:57720"/>
        <dbReference type="EC" id="2.4.2.1"/>
    </reaction>
</comment>
<comment type="catalytic activity">
    <reaction evidence="1">
        <text>inosine + phosphate = alpha-D-ribose 1-phosphate + hypoxanthine</text>
        <dbReference type="Rhea" id="RHEA:27646"/>
        <dbReference type="ChEBI" id="CHEBI:17368"/>
        <dbReference type="ChEBI" id="CHEBI:17596"/>
        <dbReference type="ChEBI" id="CHEBI:43474"/>
        <dbReference type="ChEBI" id="CHEBI:57720"/>
        <dbReference type="EC" id="2.4.2.1"/>
    </reaction>
</comment>
<comment type="catalytic activity">
    <reaction evidence="1">
        <text>thymidine + phosphate = 2-deoxy-alpha-D-ribose 1-phosphate + thymine</text>
        <dbReference type="Rhea" id="RHEA:16037"/>
        <dbReference type="ChEBI" id="CHEBI:17748"/>
        <dbReference type="ChEBI" id="CHEBI:17821"/>
        <dbReference type="ChEBI" id="CHEBI:43474"/>
        <dbReference type="ChEBI" id="CHEBI:57259"/>
        <dbReference type="EC" id="2.4.2.2"/>
    </reaction>
</comment>
<comment type="catalytic activity">
    <reaction evidence="1">
        <text>uridine + phosphate = alpha-D-ribose 1-phosphate + uracil</text>
        <dbReference type="Rhea" id="RHEA:24388"/>
        <dbReference type="ChEBI" id="CHEBI:16704"/>
        <dbReference type="ChEBI" id="CHEBI:17568"/>
        <dbReference type="ChEBI" id="CHEBI:43474"/>
        <dbReference type="ChEBI" id="CHEBI:57720"/>
        <dbReference type="EC" id="2.4.2.2"/>
    </reaction>
</comment>
<comment type="catalytic activity">
    <reaction evidence="1">
        <text>xanthosine + phosphate = alpha-D-ribose 1-phosphate + xanthine</text>
        <dbReference type="Rhea" id="RHEA:27638"/>
        <dbReference type="ChEBI" id="CHEBI:17712"/>
        <dbReference type="ChEBI" id="CHEBI:18107"/>
        <dbReference type="ChEBI" id="CHEBI:43474"/>
        <dbReference type="ChEBI" id="CHEBI:57720"/>
        <dbReference type="EC" id="2.4.2.1"/>
    </reaction>
</comment>
<comment type="similarity">
    <text evidence="1">Belongs to the nucleoside phosphorylase PpnP family.</text>
</comment>
<keyword id="KW-0328">Glycosyltransferase</keyword>
<keyword id="KW-1185">Reference proteome</keyword>
<keyword id="KW-0808">Transferase</keyword>
<accession>Q186L5</accession>
<protein>
    <recommendedName>
        <fullName evidence="1">Pyrimidine/purine nucleoside phosphorylase</fullName>
        <ecNumber evidence="1">2.4.2.1</ecNumber>
        <ecNumber evidence="1">2.4.2.2</ecNumber>
    </recommendedName>
    <alternativeName>
        <fullName evidence="1">Adenosine phosphorylase</fullName>
    </alternativeName>
    <alternativeName>
        <fullName evidence="1">Cytidine phosphorylase</fullName>
    </alternativeName>
    <alternativeName>
        <fullName evidence="1">Guanosine phosphorylase</fullName>
    </alternativeName>
    <alternativeName>
        <fullName evidence="1">Inosine phosphorylase</fullName>
    </alternativeName>
    <alternativeName>
        <fullName evidence="1">Thymidine phosphorylase</fullName>
    </alternativeName>
    <alternativeName>
        <fullName evidence="1">Uridine phosphorylase</fullName>
    </alternativeName>
    <alternativeName>
        <fullName evidence="1">Xanthosine phosphorylase</fullName>
    </alternativeName>
</protein>
<gene>
    <name evidence="1" type="primary">ppnP</name>
    <name type="ordered locus">CD630_16600</name>
</gene>
<organism>
    <name type="scientific">Clostridioides difficile (strain 630)</name>
    <name type="common">Peptoclostridium difficile</name>
    <dbReference type="NCBI Taxonomy" id="272563"/>
    <lineage>
        <taxon>Bacteria</taxon>
        <taxon>Bacillati</taxon>
        <taxon>Bacillota</taxon>
        <taxon>Clostridia</taxon>
        <taxon>Peptostreptococcales</taxon>
        <taxon>Peptostreptococcaceae</taxon>
        <taxon>Clostridioides</taxon>
    </lineage>
</organism>
<dbReference type="EC" id="2.4.2.1" evidence="1"/>
<dbReference type="EC" id="2.4.2.2" evidence="1"/>
<dbReference type="EMBL" id="AM180355">
    <property type="protein sequence ID" value="CAJ68525.1"/>
    <property type="molecule type" value="Genomic_DNA"/>
</dbReference>
<dbReference type="RefSeq" id="WP_004454504.1">
    <property type="nucleotide sequence ID" value="NZ_JAUPES010000013.1"/>
</dbReference>
<dbReference type="RefSeq" id="YP_001088161.1">
    <property type="nucleotide sequence ID" value="NC_009089.1"/>
</dbReference>
<dbReference type="SMR" id="Q186L5"/>
<dbReference type="STRING" id="272563.CD630_16600"/>
<dbReference type="EnsemblBacteria" id="CAJ68525">
    <property type="protein sequence ID" value="CAJ68525"/>
    <property type="gene ID" value="CD630_16600"/>
</dbReference>
<dbReference type="KEGG" id="cdf:CD630_16600"/>
<dbReference type="KEGG" id="pdc:CDIF630_01841"/>
<dbReference type="PATRIC" id="fig|272563.120.peg.1738"/>
<dbReference type="eggNOG" id="COG3123">
    <property type="taxonomic scope" value="Bacteria"/>
</dbReference>
<dbReference type="OrthoDB" id="9793848at2"/>
<dbReference type="PhylomeDB" id="Q186L5"/>
<dbReference type="BioCyc" id="PDIF272563:G12WB-1800-MONOMER"/>
<dbReference type="Proteomes" id="UP000001978">
    <property type="component" value="Chromosome"/>
</dbReference>
<dbReference type="GO" id="GO:0005829">
    <property type="term" value="C:cytosol"/>
    <property type="evidence" value="ECO:0007669"/>
    <property type="project" value="TreeGrafter"/>
</dbReference>
<dbReference type="GO" id="GO:0047975">
    <property type="term" value="F:guanosine phosphorylase activity"/>
    <property type="evidence" value="ECO:0007669"/>
    <property type="project" value="UniProtKB-EC"/>
</dbReference>
<dbReference type="GO" id="GO:0004731">
    <property type="term" value="F:purine-nucleoside phosphorylase activity"/>
    <property type="evidence" value="ECO:0007669"/>
    <property type="project" value="UniProtKB-UniRule"/>
</dbReference>
<dbReference type="GO" id="GO:0009032">
    <property type="term" value="F:thymidine phosphorylase activity"/>
    <property type="evidence" value="ECO:0007669"/>
    <property type="project" value="UniProtKB-EC"/>
</dbReference>
<dbReference type="GO" id="GO:0004850">
    <property type="term" value="F:uridine phosphorylase activity"/>
    <property type="evidence" value="ECO:0007669"/>
    <property type="project" value="UniProtKB-EC"/>
</dbReference>
<dbReference type="CDD" id="cd20296">
    <property type="entry name" value="cupin_PpnP-like"/>
    <property type="match status" value="1"/>
</dbReference>
<dbReference type="FunFam" id="2.60.120.10:FF:000016">
    <property type="entry name" value="Pyrimidine/purine nucleoside phosphorylase"/>
    <property type="match status" value="1"/>
</dbReference>
<dbReference type="Gene3D" id="2.60.120.10">
    <property type="entry name" value="Jelly Rolls"/>
    <property type="match status" value="1"/>
</dbReference>
<dbReference type="HAMAP" id="MF_01537">
    <property type="entry name" value="Nucleos_phosphorylase_PpnP"/>
    <property type="match status" value="1"/>
</dbReference>
<dbReference type="InterPro" id="IPR009664">
    <property type="entry name" value="Ppnp"/>
</dbReference>
<dbReference type="InterPro" id="IPR014710">
    <property type="entry name" value="RmlC-like_jellyroll"/>
</dbReference>
<dbReference type="InterPro" id="IPR011051">
    <property type="entry name" value="RmlC_Cupin_sf"/>
</dbReference>
<dbReference type="PANTHER" id="PTHR36540">
    <property type="entry name" value="PYRIMIDINE/PURINE NUCLEOSIDE PHOSPHORYLASE"/>
    <property type="match status" value="1"/>
</dbReference>
<dbReference type="PANTHER" id="PTHR36540:SF1">
    <property type="entry name" value="PYRIMIDINE_PURINE NUCLEOSIDE PHOSPHORYLASE"/>
    <property type="match status" value="1"/>
</dbReference>
<dbReference type="Pfam" id="PF06865">
    <property type="entry name" value="Ppnp"/>
    <property type="match status" value="1"/>
</dbReference>
<dbReference type="SUPFAM" id="SSF51182">
    <property type="entry name" value="RmlC-like cupins"/>
    <property type="match status" value="1"/>
</dbReference>
<feature type="chain" id="PRO_0000298691" description="Pyrimidine/purine nucleoside phosphorylase">
    <location>
        <begin position="1"/>
        <end position="105"/>
    </location>
</feature>
<reference key="1">
    <citation type="journal article" date="2006" name="Nat. Genet.">
        <title>The multidrug-resistant human pathogen Clostridium difficile has a highly mobile, mosaic genome.</title>
        <authorList>
            <person name="Sebaihia M."/>
            <person name="Wren B.W."/>
            <person name="Mullany P."/>
            <person name="Fairweather N.F."/>
            <person name="Minton N."/>
            <person name="Stabler R."/>
            <person name="Thomson N.R."/>
            <person name="Roberts A.P."/>
            <person name="Cerdeno-Tarraga A.M."/>
            <person name="Wang H."/>
            <person name="Holden M.T.G."/>
            <person name="Wright A."/>
            <person name="Churcher C."/>
            <person name="Quail M.A."/>
            <person name="Baker S."/>
            <person name="Bason N."/>
            <person name="Brooks K."/>
            <person name="Chillingworth T."/>
            <person name="Cronin A."/>
            <person name="Davis P."/>
            <person name="Dowd L."/>
            <person name="Fraser A."/>
            <person name="Feltwell T."/>
            <person name="Hance Z."/>
            <person name="Holroyd S."/>
            <person name="Jagels K."/>
            <person name="Moule S."/>
            <person name="Mungall K."/>
            <person name="Price C."/>
            <person name="Rabbinowitsch E."/>
            <person name="Sharp S."/>
            <person name="Simmonds M."/>
            <person name="Stevens K."/>
            <person name="Unwin L."/>
            <person name="Whithead S."/>
            <person name="Dupuy B."/>
            <person name="Dougan G."/>
            <person name="Barrell B."/>
            <person name="Parkhill J."/>
        </authorList>
    </citation>
    <scope>NUCLEOTIDE SEQUENCE [LARGE SCALE GENOMIC DNA]</scope>
    <source>
        <strain>630</strain>
    </source>
</reference>